<evidence type="ECO:0000250" key="1">
    <source>
        <dbReference type="UniProtKB" id="P22315"/>
    </source>
</evidence>
<evidence type="ECO:0000250" key="2">
    <source>
        <dbReference type="UniProtKB" id="P22830"/>
    </source>
</evidence>
<evidence type="ECO:0000255" key="3"/>
<evidence type="ECO:0000256" key="4">
    <source>
        <dbReference type="SAM" id="MobiDB-lite"/>
    </source>
</evidence>
<evidence type="ECO:0000305" key="5"/>
<accession>P22600</accession>
<organism>
    <name type="scientific">Bos taurus</name>
    <name type="common">Bovine</name>
    <dbReference type="NCBI Taxonomy" id="9913"/>
    <lineage>
        <taxon>Eukaryota</taxon>
        <taxon>Metazoa</taxon>
        <taxon>Chordata</taxon>
        <taxon>Craniata</taxon>
        <taxon>Vertebrata</taxon>
        <taxon>Euteleostomi</taxon>
        <taxon>Mammalia</taxon>
        <taxon>Eutheria</taxon>
        <taxon>Laurasiatheria</taxon>
        <taxon>Artiodactyla</taxon>
        <taxon>Ruminantia</taxon>
        <taxon>Pecora</taxon>
        <taxon>Bovidae</taxon>
        <taxon>Bovinae</taxon>
        <taxon>Bos</taxon>
    </lineage>
</organism>
<feature type="transit peptide" description="Mitochondrion" evidence="3">
    <location>
        <begin position="1"/>
        <end position="47"/>
    </location>
</feature>
<feature type="chain" id="PRO_0000008872" description="Ferrochelatase, mitochondrial">
    <location>
        <begin position="48"/>
        <end position="416"/>
    </location>
</feature>
<feature type="region of interest" description="Disordered" evidence="4">
    <location>
        <begin position="41"/>
        <end position="62"/>
    </location>
</feature>
<feature type="active site" evidence="2">
    <location>
        <position position="223"/>
    </location>
</feature>
<feature type="active site" evidence="2">
    <location>
        <position position="376"/>
    </location>
</feature>
<feature type="binding site" evidence="2">
    <location>
        <position position="108"/>
    </location>
    <ligand>
        <name>protoporphyrin IX</name>
        <dbReference type="ChEBI" id="CHEBI:57306"/>
    </ligand>
</feature>
<feature type="binding site" evidence="2">
    <location>
        <position position="116"/>
    </location>
    <ligand>
        <name>protoporphyrin IX</name>
        <dbReference type="ChEBI" id="CHEBI:57306"/>
    </ligand>
</feature>
<feature type="binding site" evidence="2">
    <location>
        <position position="123"/>
    </location>
    <ligand>
        <name>protoporphyrin IX</name>
        <dbReference type="ChEBI" id="CHEBI:57306"/>
    </ligand>
</feature>
<feature type="binding site" evidence="2">
    <location>
        <position position="189"/>
    </location>
    <ligand>
        <name>[2Fe-2S] cluster</name>
        <dbReference type="ChEBI" id="CHEBI:190135"/>
    </ligand>
</feature>
<feature type="binding site" evidence="2">
    <location>
        <position position="396"/>
    </location>
    <ligand>
        <name>[2Fe-2S] cluster</name>
        <dbReference type="ChEBI" id="CHEBI:190135"/>
    </ligand>
</feature>
<feature type="binding site" evidence="2">
    <location>
        <position position="399"/>
    </location>
    <ligand>
        <name>[2Fe-2S] cluster</name>
        <dbReference type="ChEBI" id="CHEBI:190135"/>
    </ligand>
</feature>
<feature type="binding site" evidence="2">
    <location>
        <position position="404"/>
    </location>
    <ligand>
        <name>[2Fe-2S] cluster</name>
        <dbReference type="ChEBI" id="CHEBI:190135"/>
    </ligand>
</feature>
<feature type="modified residue" description="N6-acetyllysine" evidence="1">
    <location>
        <position position="50"/>
    </location>
</feature>
<feature type="modified residue" description="N6-succinyllysine" evidence="1">
    <location>
        <position position="131"/>
    </location>
</feature>
<feature type="modified residue" description="N6-acetyllysine; alternate" evidence="1">
    <location>
        <position position="283"/>
    </location>
</feature>
<feature type="modified residue" description="N6-succinyllysine; alternate" evidence="1">
    <location>
        <position position="283"/>
    </location>
</feature>
<feature type="modified residue" description="N6-acetyllysine; alternate" evidence="1">
    <location>
        <position position="408"/>
    </location>
</feature>
<feature type="modified residue" description="N6-succinyllysine; alternate" evidence="1">
    <location>
        <position position="408"/>
    </location>
</feature>
<feature type="sequence conflict" description="In Ref. 2; AA sequence." evidence="5" ref="2">
    <original>D</original>
    <variation>E</variation>
    <location>
        <position position="282"/>
    </location>
</feature>
<feature type="sequence conflict" description="In Ref. 2; AA sequence and 3; AA sequence." evidence="5" ref="2 3">
    <original>S</original>
    <variation>P</variation>
    <location>
        <position position="287"/>
    </location>
</feature>
<sequence length="416" mass="46935">MAAALRSAGVLLRDRLLYGGSRACQPRRCQSGAATAAAATETAQRARSPKPQAQPGNRKPRTGILMLNMGGPETVEEVQDFLQRLFLDQDLMTLPVQDKLGPFIAKRRTPKIQEQYRRIGGGSPIKMWTSKQGEGMVKLLDELSPHTAPHKYYIGFRYVHPLTEEAIEEMERDGLERAVAFTQYPQYSCSTTGSSLNAIYRYYNEVGRKPTMKWSTIDRWPTHPLLIQCFADHILKELDHFPPEKRREVVILFSAHSLPMSVVNRGDPYPQEVGATVQRVMDKLGYSNPYRLVWQSKVGPMPWLGPQTDEAIKGLCKRGRKNILLVPIAFTSDHIETLYELDIEYSQVLASECGLENIRRAESLNGNPLFSKALADLVHSHLQSKERCSTQLTLSCPLCVNPTCRETKSFFTSQQL</sequence>
<keyword id="KW-0001">2Fe-2S</keyword>
<keyword id="KW-0007">Acetylation</keyword>
<keyword id="KW-0903">Direct protein sequencing</keyword>
<keyword id="KW-0350">Heme biosynthesis</keyword>
<keyword id="KW-0408">Iron</keyword>
<keyword id="KW-0411">Iron-sulfur</keyword>
<keyword id="KW-0456">Lyase</keyword>
<keyword id="KW-0472">Membrane</keyword>
<keyword id="KW-0479">Metal-binding</keyword>
<keyword id="KW-0496">Mitochondrion</keyword>
<keyword id="KW-0999">Mitochondrion inner membrane</keyword>
<keyword id="KW-0627">Porphyrin biosynthesis</keyword>
<keyword id="KW-1185">Reference proteome</keyword>
<keyword id="KW-0809">Transit peptide</keyword>
<dbReference type="EC" id="4.98.1.1" evidence="2"/>
<dbReference type="EMBL" id="L34173">
    <property type="protein sequence ID" value="AAA79169.1"/>
    <property type="molecule type" value="mRNA"/>
</dbReference>
<dbReference type="PIR" id="I45890">
    <property type="entry name" value="I45890"/>
</dbReference>
<dbReference type="RefSeq" id="NP_776479.1">
    <property type="nucleotide sequence ID" value="NM_174054.2"/>
</dbReference>
<dbReference type="SMR" id="P22600"/>
<dbReference type="FunCoup" id="P22600">
    <property type="interactions" value="2136"/>
</dbReference>
<dbReference type="STRING" id="9913.ENSBTAP00000008384"/>
<dbReference type="iPTMnet" id="P22600"/>
<dbReference type="PaxDb" id="9913-ENSBTAP00000008384"/>
<dbReference type="GeneID" id="281158"/>
<dbReference type="KEGG" id="bta:281158"/>
<dbReference type="CTD" id="2235"/>
<dbReference type="VEuPathDB" id="HostDB:ENSBTAG00000006393"/>
<dbReference type="eggNOG" id="KOG1321">
    <property type="taxonomic scope" value="Eukaryota"/>
</dbReference>
<dbReference type="HOGENOM" id="CLU_018884_1_0_1"/>
<dbReference type="InParanoid" id="P22600"/>
<dbReference type="OMA" id="DPYHCEC"/>
<dbReference type="OrthoDB" id="1323at2759"/>
<dbReference type="TreeFam" id="TF300859"/>
<dbReference type="Reactome" id="R-BTA-189451">
    <property type="pathway name" value="Heme biosynthesis"/>
</dbReference>
<dbReference type="Reactome" id="R-BTA-9837999">
    <property type="pathway name" value="Mitochondrial protein degradation"/>
</dbReference>
<dbReference type="SABIO-RK" id="P22600"/>
<dbReference type="UniPathway" id="UPA00252">
    <property type="reaction ID" value="UER00325"/>
</dbReference>
<dbReference type="Proteomes" id="UP000009136">
    <property type="component" value="Chromosome 24"/>
</dbReference>
<dbReference type="Bgee" id="ENSBTAG00000006393">
    <property type="expression patterns" value="Expressed in biceps femoris and 105 other cell types or tissues"/>
</dbReference>
<dbReference type="GO" id="GO:0005743">
    <property type="term" value="C:mitochondrial inner membrane"/>
    <property type="evidence" value="ECO:0000250"/>
    <property type="project" value="UniProtKB"/>
</dbReference>
<dbReference type="GO" id="GO:0005739">
    <property type="term" value="C:mitochondrion"/>
    <property type="evidence" value="ECO:0000318"/>
    <property type="project" value="GO_Central"/>
</dbReference>
<dbReference type="GO" id="GO:0051537">
    <property type="term" value="F:2 iron, 2 sulfur cluster binding"/>
    <property type="evidence" value="ECO:0007669"/>
    <property type="project" value="UniProtKB-KW"/>
</dbReference>
<dbReference type="GO" id="GO:0004325">
    <property type="term" value="F:ferrochelatase activity"/>
    <property type="evidence" value="ECO:0000250"/>
    <property type="project" value="UniProtKB"/>
</dbReference>
<dbReference type="GO" id="GO:0046872">
    <property type="term" value="F:metal ion binding"/>
    <property type="evidence" value="ECO:0007669"/>
    <property type="project" value="UniProtKB-KW"/>
</dbReference>
<dbReference type="GO" id="GO:0006783">
    <property type="term" value="P:heme biosynthetic process"/>
    <property type="evidence" value="ECO:0000250"/>
    <property type="project" value="UniProtKB"/>
</dbReference>
<dbReference type="CDD" id="cd00419">
    <property type="entry name" value="Ferrochelatase_C"/>
    <property type="match status" value="1"/>
</dbReference>
<dbReference type="CDD" id="cd03411">
    <property type="entry name" value="Ferrochelatase_N"/>
    <property type="match status" value="1"/>
</dbReference>
<dbReference type="FunFam" id="3.40.50.1400:FF:000003">
    <property type="entry name" value="Ferrochelatase"/>
    <property type="match status" value="1"/>
</dbReference>
<dbReference type="Gene3D" id="3.40.50.1400">
    <property type="match status" value="2"/>
</dbReference>
<dbReference type="HAMAP" id="MF_00323">
    <property type="entry name" value="Ferrochelatase"/>
    <property type="match status" value="1"/>
</dbReference>
<dbReference type="InterPro" id="IPR001015">
    <property type="entry name" value="Ferrochelatase"/>
</dbReference>
<dbReference type="InterPro" id="IPR019772">
    <property type="entry name" value="Ferrochelatase_AS"/>
</dbReference>
<dbReference type="InterPro" id="IPR033644">
    <property type="entry name" value="Ferrochelatase_C"/>
</dbReference>
<dbReference type="InterPro" id="IPR033659">
    <property type="entry name" value="Ferrochelatase_N"/>
</dbReference>
<dbReference type="NCBIfam" id="TIGR00109">
    <property type="entry name" value="hemH"/>
    <property type="match status" value="1"/>
</dbReference>
<dbReference type="PANTHER" id="PTHR11108">
    <property type="entry name" value="FERROCHELATASE"/>
    <property type="match status" value="1"/>
</dbReference>
<dbReference type="PANTHER" id="PTHR11108:SF1">
    <property type="entry name" value="FERROCHELATASE, MITOCHONDRIAL"/>
    <property type="match status" value="1"/>
</dbReference>
<dbReference type="Pfam" id="PF00762">
    <property type="entry name" value="Ferrochelatase"/>
    <property type="match status" value="1"/>
</dbReference>
<dbReference type="SUPFAM" id="SSF53800">
    <property type="entry name" value="Chelatase"/>
    <property type="match status" value="1"/>
</dbReference>
<dbReference type="PROSITE" id="PS00534">
    <property type="entry name" value="FERROCHELATASE"/>
    <property type="match status" value="1"/>
</dbReference>
<name>HEMH_BOVIN</name>
<comment type="function">
    <text evidence="2">Catalyzes the ferrous insertion into protoporphyrin IX and participates in the terminal step in the heme biosynthetic pathway.</text>
</comment>
<comment type="catalytic activity">
    <reaction evidence="2">
        <text>heme b + 2 H(+) = protoporphyrin IX + Fe(2+)</text>
        <dbReference type="Rhea" id="RHEA:22584"/>
        <dbReference type="ChEBI" id="CHEBI:15378"/>
        <dbReference type="ChEBI" id="CHEBI:29033"/>
        <dbReference type="ChEBI" id="CHEBI:57306"/>
        <dbReference type="ChEBI" id="CHEBI:60344"/>
        <dbReference type="EC" id="4.98.1.1"/>
    </reaction>
    <physiologicalReaction direction="right-to-left" evidence="2">
        <dbReference type="Rhea" id="RHEA:22586"/>
    </physiologicalReaction>
</comment>
<comment type="cofactor">
    <cofactor evidence="2">
        <name>[2Fe-2S] cluster</name>
        <dbReference type="ChEBI" id="CHEBI:190135"/>
    </cofactor>
    <text evidence="2">Binds 1 [2Fe-2S] cluster.</text>
</comment>
<comment type="pathway">
    <text evidence="2">Porphyrin-containing compound metabolism; protoheme biosynthesis; protoheme from protoporphyrin-IX: step 1/1.</text>
</comment>
<comment type="subunit">
    <text evidence="1 2">Homodimer. Homotetramer (By similarity). Interaction with PGRMC1; the interaction results in decreased FECH activity (By similarity). Interacts with ABCB10 and SLC25A37; this interaction forms an oligomeric complex (By similarity). Forms a complex with ABCB7 and ABCB10, where a dimeric FECH bridges ABCB7 and ABCB10 homodimers; this complex may be required for cellular iron homeostasis, mitochondrial function and heme biosynthesis. Interacts with ABCB7 and ABCB10 (By similarity).</text>
</comment>
<comment type="subcellular location">
    <subcellularLocation>
        <location evidence="1">Mitochondrion inner membrane</location>
        <topology evidence="1">Peripheral membrane protein</topology>
        <orientation evidence="1">Matrix side</orientation>
    </subcellularLocation>
</comment>
<comment type="similarity">
    <text evidence="5">Belongs to the ferrochelatase family.</text>
</comment>
<proteinExistence type="evidence at protein level"/>
<protein>
    <recommendedName>
        <fullName evidence="2">Ferrochelatase, mitochondrial</fullName>
        <ecNumber evidence="2">4.98.1.1</ecNumber>
    </recommendedName>
    <alternativeName>
        <fullName>Heme synthase</fullName>
    </alternativeName>
    <alternativeName>
        <fullName>Protoheme ferro-lyase</fullName>
    </alternativeName>
</protein>
<gene>
    <name evidence="2" type="primary">FECH</name>
</gene>
<reference key="1">
    <citation type="journal article" date="1995" name="Biochim. Biophys. Acta">
        <title>The coding sequence of the bovine ferrochelatase gene.</title>
        <authorList>
            <person name="Shibuya H."/>
            <person name="Nonneman D."/>
            <person name="Tamassia M."/>
            <person name="Allphin O.L."/>
            <person name="Johnson G.S."/>
        </authorList>
    </citation>
    <scope>NUCLEOTIDE SEQUENCE [MRNA]</scope>
</reference>
<reference key="2">
    <citation type="journal article" date="1991" name="Proc. Natl. Acad. Sci. U.S.A.">
        <title>Cloning of murine ferrochelatase.</title>
        <authorList>
            <person name="Brenner D.A."/>
            <person name="Frasier F."/>
        </authorList>
    </citation>
    <scope>PROTEIN SEQUENCE OF 281-311</scope>
    <source>
        <tissue>Liver</tissue>
    </source>
</reference>
<reference key="3">
    <citation type="journal article" date="1990" name="J. Biol. Chem.">
        <title>Molecular cloning, sequencing, and expression of mouse ferrochelatase.</title>
        <authorList>
            <person name="Taketani S."/>
            <person name="Nakahashi Y."/>
            <person name="Osumi T."/>
            <person name="Tokunaga R."/>
        </authorList>
    </citation>
    <scope>PROTEIN SEQUENCE OF 152-157; 266-275; 284-291 AND 373-381</scope>
</reference>